<protein>
    <recommendedName>
        <fullName>Uncharacterized protein YhdU</fullName>
    </recommendedName>
</protein>
<accession>P64621</accession>
<accession>P45764</accession>
<organism>
    <name type="scientific">Escherichia coli O157:H7</name>
    <dbReference type="NCBI Taxonomy" id="83334"/>
    <lineage>
        <taxon>Bacteria</taxon>
        <taxon>Pseudomonadati</taxon>
        <taxon>Pseudomonadota</taxon>
        <taxon>Gammaproteobacteria</taxon>
        <taxon>Enterobacterales</taxon>
        <taxon>Enterobacteriaceae</taxon>
        <taxon>Escherichia</taxon>
    </lineage>
</organism>
<comment type="subcellular location">
    <subcellularLocation>
        <location evidence="2">Membrane</location>
        <topology evidence="2">Single-pass membrane protein</topology>
    </subcellularLocation>
</comment>
<gene>
    <name type="primary">yhdU</name>
    <name type="ordered locus">Z4623</name>
    <name type="ordered locus">ECs4135</name>
</gene>
<evidence type="ECO:0000255" key="1"/>
<evidence type="ECO:0000305" key="2"/>
<feature type="chain" id="PRO_0000169500" description="Uncharacterized protein YhdU">
    <location>
        <begin position="1"/>
        <end position="59"/>
    </location>
</feature>
<feature type="transmembrane region" description="Helical" evidence="1">
    <location>
        <begin position="6"/>
        <end position="26"/>
    </location>
</feature>
<proteinExistence type="predicted"/>
<name>YHDU_ECO57</name>
<keyword id="KW-0472">Membrane</keyword>
<keyword id="KW-1185">Reference proteome</keyword>
<keyword id="KW-0812">Transmembrane</keyword>
<keyword id="KW-1133">Transmembrane helix</keyword>
<sequence length="59" mass="7204">MIRKYWWLVVFAVFVFLFDTLLMQWIELLATETDKCRNMNSVNPLKLVNCDELNFQDRM</sequence>
<dbReference type="EMBL" id="AE005174">
    <property type="protein sequence ID" value="AAG58391.1"/>
    <property type="molecule type" value="Genomic_DNA"/>
</dbReference>
<dbReference type="EMBL" id="BA000007">
    <property type="protein sequence ID" value="BAB37558.1"/>
    <property type="molecule type" value="Genomic_DNA"/>
</dbReference>
<dbReference type="PIR" id="C85991">
    <property type="entry name" value="C85991"/>
</dbReference>
<dbReference type="PIR" id="G91145">
    <property type="entry name" value="G91145"/>
</dbReference>
<dbReference type="RefSeq" id="NP_312162.1">
    <property type="nucleotide sequence ID" value="NC_002695.1"/>
</dbReference>
<dbReference type="RefSeq" id="WP_001295275.1">
    <property type="nucleotide sequence ID" value="NZ_VOAI01000014.1"/>
</dbReference>
<dbReference type="SMR" id="P64621"/>
<dbReference type="STRING" id="155864.Z4623"/>
<dbReference type="GeneID" id="916017"/>
<dbReference type="KEGG" id="ece:Z4623"/>
<dbReference type="KEGG" id="ecs:ECs_4135"/>
<dbReference type="PATRIC" id="fig|386585.9.peg.4318"/>
<dbReference type="HOGENOM" id="CLU_2914126_0_0_6"/>
<dbReference type="OMA" id="QWIELMS"/>
<dbReference type="Proteomes" id="UP000000558">
    <property type="component" value="Chromosome"/>
</dbReference>
<dbReference type="Proteomes" id="UP000002519">
    <property type="component" value="Chromosome"/>
</dbReference>
<dbReference type="GO" id="GO:0016020">
    <property type="term" value="C:membrane"/>
    <property type="evidence" value="ECO:0007669"/>
    <property type="project" value="UniProtKB-SubCell"/>
</dbReference>
<dbReference type="InterPro" id="IPR022540">
    <property type="entry name" value="DUF2556"/>
</dbReference>
<dbReference type="Pfam" id="PF10831">
    <property type="entry name" value="DUF2556"/>
    <property type="match status" value="1"/>
</dbReference>
<reference key="1">
    <citation type="journal article" date="2001" name="Nature">
        <title>Genome sequence of enterohaemorrhagic Escherichia coli O157:H7.</title>
        <authorList>
            <person name="Perna N.T."/>
            <person name="Plunkett G. III"/>
            <person name="Burland V."/>
            <person name="Mau B."/>
            <person name="Glasner J.D."/>
            <person name="Rose D.J."/>
            <person name="Mayhew G.F."/>
            <person name="Evans P.S."/>
            <person name="Gregor J."/>
            <person name="Kirkpatrick H.A."/>
            <person name="Posfai G."/>
            <person name="Hackett J."/>
            <person name="Klink S."/>
            <person name="Boutin A."/>
            <person name="Shao Y."/>
            <person name="Miller L."/>
            <person name="Grotbeck E.J."/>
            <person name="Davis N.W."/>
            <person name="Lim A."/>
            <person name="Dimalanta E.T."/>
            <person name="Potamousis K."/>
            <person name="Apodaca J."/>
            <person name="Anantharaman T.S."/>
            <person name="Lin J."/>
            <person name="Yen G."/>
            <person name="Schwartz D.C."/>
            <person name="Welch R.A."/>
            <person name="Blattner F.R."/>
        </authorList>
    </citation>
    <scope>NUCLEOTIDE SEQUENCE [LARGE SCALE GENOMIC DNA]</scope>
    <source>
        <strain>O157:H7 / EDL933 / ATCC 700927 / EHEC</strain>
    </source>
</reference>
<reference key="2">
    <citation type="journal article" date="2001" name="DNA Res.">
        <title>Complete genome sequence of enterohemorrhagic Escherichia coli O157:H7 and genomic comparison with a laboratory strain K-12.</title>
        <authorList>
            <person name="Hayashi T."/>
            <person name="Makino K."/>
            <person name="Ohnishi M."/>
            <person name="Kurokawa K."/>
            <person name="Ishii K."/>
            <person name="Yokoyama K."/>
            <person name="Han C.-G."/>
            <person name="Ohtsubo E."/>
            <person name="Nakayama K."/>
            <person name="Murata T."/>
            <person name="Tanaka M."/>
            <person name="Tobe T."/>
            <person name="Iida T."/>
            <person name="Takami H."/>
            <person name="Honda T."/>
            <person name="Sasakawa C."/>
            <person name="Ogasawara N."/>
            <person name="Yasunaga T."/>
            <person name="Kuhara S."/>
            <person name="Shiba T."/>
            <person name="Hattori M."/>
            <person name="Shinagawa H."/>
        </authorList>
    </citation>
    <scope>NUCLEOTIDE SEQUENCE [LARGE SCALE GENOMIC DNA]</scope>
    <source>
        <strain>O157:H7 / Sakai / RIMD 0509952 / EHEC</strain>
    </source>
</reference>